<protein>
    <recommendedName>
        <fullName evidence="1">NADH-quinone oxidoreductase subunit D 1</fullName>
        <ecNumber evidence="1">7.1.1.-</ecNumber>
    </recommendedName>
    <alternativeName>
        <fullName evidence="1">NADH dehydrogenase I subunit D 1</fullName>
    </alternativeName>
    <alternativeName>
        <fullName evidence="1">NDH-1 subunit D 1</fullName>
    </alternativeName>
</protein>
<dbReference type="EC" id="7.1.1.-" evidence="1"/>
<dbReference type="EMBL" id="AJ245398">
    <property type="protein sequence ID" value="CAB51623.1"/>
    <property type="molecule type" value="Genomic_DNA"/>
</dbReference>
<dbReference type="EMBL" id="AL591688">
    <property type="protein sequence ID" value="CAC45846.1"/>
    <property type="molecule type" value="Genomic_DNA"/>
</dbReference>
<dbReference type="RefSeq" id="NP_385373.1">
    <property type="nucleotide sequence ID" value="NC_003047.1"/>
</dbReference>
<dbReference type="RefSeq" id="WP_003531832.1">
    <property type="nucleotide sequence ID" value="NC_003047.1"/>
</dbReference>
<dbReference type="SMR" id="P56907"/>
<dbReference type="EnsemblBacteria" id="CAC45846">
    <property type="protein sequence ID" value="CAC45846"/>
    <property type="gene ID" value="SMc01915"/>
</dbReference>
<dbReference type="KEGG" id="sme:SMc01915"/>
<dbReference type="PATRIC" id="fig|266834.11.peg.2681"/>
<dbReference type="eggNOG" id="COG0649">
    <property type="taxonomic scope" value="Bacteria"/>
</dbReference>
<dbReference type="HOGENOM" id="CLU_015134_1_1_5"/>
<dbReference type="OrthoDB" id="9801496at2"/>
<dbReference type="Proteomes" id="UP000001976">
    <property type="component" value="Chromosome"/>
</dbReference>
<dbReference type="GO" id="GO:0005886">
    <property type="term" value="C:plasma membrane"/>
    <property type="evidence" value="ECO:0007669"/>
    <property type="project" value="UniProtKB-SubCell"/>
</dbReference>
<dbReference type="GO" id="GO:0051287">
    <property type="term" value="F:NAD binding"/>
    <property type="evidence" value="ECO:0007669"/>
    <property type="project" value="InterPro"/>
</dbReference>
<dbReference type="GO" id="GO:0050136">
    <property type="term" value="F:NADH:ubiquinone reductase (non-electrogenic) activity"/>
    <property type="evidence" value="ECO:0007669"/>
    <property type="project" value="UniProtKB-UniRule"/>
</dbReference>
<dbReference type="GO" id="GO:0048038">
    <property type="term" value="F:quinone binding"/>
    <property type="evidence" value="ECO:0007669"/>
    <property type="project" value="UniProtKB-KW"/>
</dbReference>
<dbReference type="FunFam" id="1.10.645.10:FF:000005">
    <property type="entry name" value="NADH-quinone oxidoreductase subunit D"/>
    <property type="match status" value="1"/>
</dbReference>
<dbReference type="Gene3D" id="1.10.645.10">
    <property type="entry name" value="Cytochrome-c3 Hydrogenase, chain B"/>
    <property type="match status" value="1"/>
</dbReference>
<dbReference type="HAMAP" id="MF_01358">
    <property type="entry name" value="NDH1_NuoD"/>
    <property type="match status" value="1"/>
</dbReference>
<dbReference type="InterPro" id="IPR001135">
    <property type="entry name" value="NADH_Q_OxRdtase_suD"/>
</dbReference>
<dbReference type="InterPro" id="IPR014029">
    <property type="entry name" value="NADH_UbQ_OxRdtase_49kDa_CS"/>
</dbReference>
<dbReference type="InterPro" id="IPR022885">
    <property type="entry name" value="NDH1_su_D/H"/>
</dbReference>
<dbReference type="InterPro" id="IPR029014">
    <property type="entry name" value="NiFe-Hase_large"/>
</dbReference>
<dbReference type="NCBIfam" id="TIGR01962">
    <property type="entry name" value="NuoD"/>
    <property type="match status" value="1"/>
</dbReference>
<dbReference type="NCBIfam" id="NF004739">
    <property type="entry name" value="PRK06075.1"/>
    <property type="match status" value="1"/>
</dbReference>
<dbReference type="PANTHER" id="PTHR11993:SF10">
    <property type="entry name" value="NADH DEHYDROGENASE [UBIQUINONE] IRON-SULFUR PROTEIN 2, MITOCHONDRIAL"/>
    <property type="match status" value="1"/>
</dbReference>
<dbReference type="PANTHER" id="PTHR11993">
    <property type="entry name" value="NADH-UBIQUINONE OXIDOREDUCTASE 49 KDA SUBUNIT"/>
    <property type="match status" value="1"/>
</dbReference>
<dbReference type="Pfam" id="PF00346">
    <property type="entry name" value="Complex1_49kDa"/>
    <property type="match status" value="1"/>
</dbReference>
<dbReference type="SUPFAM" id="SSF56762">
    <property type="entry name" value="HydB/Nqo4-like"/>
    <property type="match status" value="1"/>
</dbReference>
<dbReference type="PROSITE" id="PS00535">
    <property type="entry name" value="COMPLEX1_49K"/>
    <property type="match status" value="1"/>
</dbReference>
<keyword id="KW-0997">Cell inner membrane</keyword>
<keyword id="KW-1003">Cell membrane</keyword>
<keyword id="KW-0472">Membrane</keyword>
<keyword id="KW-0520">NAD</keyword>
<keyword id="KW-0874">Quinone</keyword>
<keyword id="KW-1185">Reference proteome</keyword>
<keyword id="KW-1278">Translocase</keyword>
<keyword id="KW-0813">Transport</keyword>
<keyword id="KW-0830">Ubiquinone</keyword>
<name>NUOD1_RHIME</name>
<comment type="function">
    <text evidence="1">NDH-1 shuttles electrons from NADH, via FMN and iron-sulfur (Fe-S) centers, to quinones in the respiratory chain. The immediate electron acceptor for the enzyme in this species is believed to be ubiquinone. Couples the redox reaction to proton translocation (for every two electrons transferred, four hydrogen ions are translocated across the cytoplasmic membrane), and thus conserves the redox energy in a proton gradient.</text>
</comment>
<comment type="catalytic activity">
    <reaction evidence="1">
        <text>a quinone + NADH + 5 H(+)(in) = a quinol + NAD(+) + 4 H(+)(out)</text>
        <dbReference type="Rhea" id="RHEA:57888"/>
        <dbReference type="ChEBI" id="CHEBI:15378"/>
        <dbReference type="ChEBI" id="CHEBI:24646"/>
        <dbReference type="ChEBI" id="CHEBI:57540"/>
        <dbReference type="ChEBI" id="CHEBI:57945"/>
        <dbReference type="ChEBI" id="CHEBI:132124"/>
    </reaction>
</comment>
<comment type="subunit">
    <text evidence="1">NDH-1 is composed of 14 different subunits. Subunits NuoB, C, D, E, F, and G constitute the peripheral sector of the complex.</text>
</comment>
<comment type="subcellular location">
    <subcellularLocation>
        <location evidence="1">Cell inner membrane</location>
        <topology evidence="1">Peripheral membrane protein</topology>
        <orientation evidence="1">Cytoplasmic side</orientation>
    </subcellularLocation>
</comment>
<comment type="similarity">
    <text evidence="1">Belongs to the complex I 49 kDa subunit family.</text>
</comment>
<sequence length="396" mass="44685">MTEHNVRNFNINFGPQHPAAHGVLRLVLELDGEIVERVDPHIGLLHRGTEKLIEAKTYLQAIPYFDRLDYVAPMNQEHAFALAVERLTGTQVPIRGQLIRVLYSEIGRILSHLLNVTTQAMDVGALTPPLWGFEEREKLMVFYERACGARMHAAYFRPGGVHQDLPHQLVEDIGNWIDPFLKTVDDIDELLTGNRIFKQRNVDIGVVSLEDAWAWGFSGVMVRGSGAAWDLRRSQPYECYSDLEFDIPIGKNGDCFDRYLIRMIEMRQSARIMRQCVDRLLGDAKIGPVSSLDGKIVPPKRGEMKRSMEALIHHFKLYTEGYHVPAGEVYAAVEAPKGEFGVYLVSDGTNKPYRCKIRAPGYAHLQAMDFLCRGHQLADVSAVLGSLDIVFGEVDR</sequence>
<proteinExistence type="inferred from homology"/>
<gene>
    <name evidence="1" type="primary">nuoD1</name>
    <name type="ordered locus">R01267</name>
    <name type="ORF">SMc01915</name>
</gene>
<reference key="1">
    <citation type="submission" date="1999-07" db="EMBL/GenBank/DDBJ databases">
        <title>Rhizobium meliloti carries two sets of nuo genes.</title>
        <authorList>
            <person name="Putnoky P."/>
            <person name="Jady B."/>
            <person name="Chellapilla K.P."/>
            <person name="Barta F."/>
            <person name="Kiss E."/>
        </authorList>
    </citation>
    <scope>NUCLEOTIDE SEQUENCE [GENOMIC DNA]</scope>
    <source>
        <strain>41</strain>
    </source>
</reference>
<reference key="2">
    <citation type="journal article" date="2001" name="Proc. Natl. Acad. Sci. U.S.A.">
        <title>Analysis of the chromosome sequence of the legume symbiont Sinorhizobium meliloti strain 1021.</title>
        <authorList>
            <person name="Capela D."/>
            <person name="Barloy-Hubler F."/>
            <person name="Gouzy J."/>
            <person name="Bothe G."/>
            <person name="Ampe F."/>
            <person name="Batut J."/>
            <person name="Boistard P."/>
            <person name="Becker A."/>
            <person name="Boutry M."/>
            <person name="Cadieu E."/>
            <person name="Dreano S."/>
            <person name="Gloux S."/>
            <person name="Godrie T."/>
            <person name="Goffeau A."/>
            <person name="Kahn D."/>
            <person name="Kiss E."/>
            <person name="Lelaure V."/>
            <person name="Masuy D."/>
            <person name="Pohl T."/>
            <person name="Portetelle D."/>
            <person name="Puehler A."/>
            <person name="Purnelle B."/>
            <person name="Ramsperger U."/>
            <person name="Renard C."/>
            <person name="Thebault P."/>
            <person name="Vandenbol M."/>
            <person name="Weidner S."/>
            <person name="Galibert F."/>
        </authorList>
    </citation>
    <scope>NUCLEOTIDE SEQUENCE [LARGE SCALE GENOMIC DNA]</scope>
    <source>
        <strain>1021</strain>
    </source>
</reference>
<reference key="3">
    <citation type="journal article" date="2001" name="Science">
        <title>The composite genome of the legume symbiont Sinorhizobium meliloti.</title>
        <authorList>
            <person name="Galibert F."/>
            <person name="Finan T.M."/>
            <person name="Long S.R."/>
            <person name="Puehler A."/>
            <person name="Abola P."/>
            <person name="Ampe F."/>
            <person name="Barloy-Hubler F."/>
            <person name="Barnett M.J."/>
            <person name="Becker A."/>
            <person name="Boistard P."/>
            <person name="Bothe G."/>
            <person name="Boutry M."/>
            <person name="Bowser L."/>
            <person name="Buhrmester J."/>
            <person name="Cadieu E."/>
            <person name="Capela D."/>
            <person name="Chain P."/>
            <person name="Cowie A."/>
            <person name="Davis R.W."/>
            <person name="Dreano S."/>
            <person name="Federspiel N.A."/>
            <person name="Fisher R.F."/>
            <person name="Gloux S."/>
            <person name="Godrie T."/>
            <person name="Goffeau A."/>
            <person name="Golding B."/>
            <person name="Gouzy J."/>
            <person name="Gurjal M."/>
            <person name="Hernandez-Lucas I."/>
            <person name="Hong A."/>
            <person name="Huizar L."/>
            <person name="Hyman R.W."/>
            <person name="Jones T."/>
            <person name="Kahn D."/>
            <person name="Kahn M.L."/>
            <person name="Kalman S."/>
            <person name="Keating D.H."/>
            <person name="Kiss E."/>
            <person name="Komp C."/>
            <person name="Lelaure V."/>
            <person name="Masuy D."/>
            <person name="Palm C."/>
            <person name="Peck M.C."/>
            <person name="Pohl T.M."/>
            <person name="Portetelle D."/>
            <person name="Purnelle B."/>
            <person name="Ramsperger U."/>
            <person name="Surzycki R."/>
            <person name="Thebault P."/>
            <person name="Vandenbol M."/>
            <person name="Vorhoelter F.J."/>
            <person name="Weidner S."/>
            <person name="Wells D.H."/>
            <person name="Wong K."/>
            <person name="Yeh K.-C."/>
            <person name="Batut J."/>
        </authorList>
    </citation>
    <scope>NUCLEOTIDE SEQUENCE [LARGE SCALE GENOMIC DNA]</scope>
    <source>
        <strain>1021</strain>
    </source>
</reference>
<organism>
    <name type="scientific">Rhizobium meliloti (strain 1021)</name>
    <name type="common">Ensifer meliloti</name>
    <name type="synonym">Sinorhizobium meliloti</name>
    <dbReference type="NCBI Taxonomy" id="266834"/>
    <lineage>
        <taxon>Bacteria</taxon>
        <taxon>Pseudomonadati</taxon>
        <taxon>Pseudomonadota</taxon>
        <taxon>Alphaproteobacteria</taxon>
        <taxon>Hyphomicrobiales</taxon>
        <taxon>Rhizobiaceae</taxon>
        <taxon>Sinorhizobium/Ensifer group</taxon>
        <taxon>Sinorhizobium</taxon>
    </lineage>
</organism>
<accession>P56907</accession>
<evidence type="ECO:0000255" key="1">
    <source>
        <dbReference type="HAMAP-Rule" id="MF_01358"/>
    </source>
</evidence>
<feature type="chain" id="PRO_0000118622" description="NADH-quinone oxidoreductase subunit D 1">
    <location>
        <begin position="1"/>
        <end position="396"/>
    </location>
</feature>